<reference key="1">
    <citation type="submission" date="1997-10" db="EMBL/GenBank/DDBJ databases">
        <title>Cloning and characterization of a cDNA encoding Chlamydomonas reinhardtii calreticulin.</title>
        <authorList>
            <person name="Zuppini A."/>
            <person name="Kaydamov C."/>
        </authorList>
    </citation>
    <scope>NUCLEOTIDE SEQUENCE [MRNA]</scope>
    <source>
        <strain>137c / CC-125</strain>
    </source>
</reference>
<dbReference type="EMBL" id="AJ000765">
    <property type="protein sequence ID" value="CAB54526.1"/>
    <property type="molecule type" value="mRNA"/>
</dbReference>
<dbReference type="RefSeq" id="XP_001689661.1">
    <property type="nucleotide sequence ID" value="XM_001689609.2"/>
</dbReference>
<dbReference type="SMR" id="Q9STD3"/>
<dbReference type="PaxDb" id="3055-EDP09399"/>
<dbReference type="ProMEX" id="Q9STD3"/>
<dbReference type="EnsemblPlants" id="PNW88643">
    <property type="protein sequence ID" value="PNW88643"/>
    <property type="gene ID" value="CHLRE_01g038400v5"/>
</dbReference>
<dbReference type="GeneID" id="5715514"/>
<dbReference type="Gramene" id="PNW88643">
    <property type="protein sequence ID" value="PNW88643"/>
    <property type="gene ID" value="CHLRE_01g038400v5"/>
</dbReference>
<dbReference type="KEGG" id="cre:CHLRE_01g038400v5"/>
<dbReference type="eggNOG" id="KOG0674">
    <property type="taxonomic scope" value="Eukaryota"/>
</dbReference>
<dbReference type="HOGENOM" id="CLU_018224_0_2_1"/>
<dbReference type="OMA" id="KRDEICA"/>
<dbReference type="OrthoDB" id="1938156at2759"/>
<dbReference type="GO" id="GO:0005788">
    <property type="term" value="C:endoplasmic reticulum lumen"/>
    <property type="evidence" value="ECO:0007669"/>
    <property type="project" value="UniProtKB-SubCell"/>
</dbReference>
<dbReference type="GO" id="GO:0005509">
    <property type="term" value="F:calcium ion binding"/>
    <property type="evidence" value="ECO:0007669"/>
    <property type="project" value="InterPro"/>
</dbReference>
<dbReference type="GO" id="GO:0030246">
    <property type="term" value="F:carbohydrate binding"/>
    <property type="evidence" value="ECO:0007669"/>
    <property type="project" value="UniProtKB-KW"/>
</dbReference>
<dbReference type="GO" id="GO:0051082">
    <property type="term" value="F:unfolded protein binding"/>
    <property type="evidence" value="ECO:0007669"/>
    <property type="project" value="InterPro"/>
</dbReference>
<dbReference type="GO" id="GO:0006457">
    <property type="term" value="P:protein folding"/>
    <property type="evidence" value="ECO:0007669"/>
    <property type="project" value="InterPro"/>
</dbReference>
<dbReference type="FunFam" id="2.10.250.10:FF:000002">
    <property type="entry name" value="Calreticulin"/>
    <property type="match status" value="1"/>
</dbReference>
<dbReference type="FunFam" id="2.60.120.200:FF:000018">
    <property type="entry name" value="Calreticulin 1b"/>
    <property type="match status" value="1"/>
</dbReference>
<dbReference type="Gene3D" id="2.60.120.200">
    <property type="match status" value="1"/>
</dbReference>
<dbReference type="Gene3D" id="2.10.250.10">
    <property type="entry name" value="Calreticulin/calnexin, P domain"/>
    <property type="match status" value="1"/>
</dbReference>
<dbReference type="InterPro" id="IPR001580">
    <property type="entry name" value="Calret/calnex"/>
</dbReference>
<dbReference type="InterPro" id="IPR018124">
    <property type="entry name" value="Calret/calnex_CS"/>
</dbReference>
<dbReference type="InterPro" id="IPR009169">
    <property type="entry name" value="Calreticulin"/>
</dbReference>
<dbReference type="InterPro" id="IPR009033">
    <property type="entry name" value="Calreticulin/calnexin_P_dom_sf"/>
</dbReference>
<dbReference type="InterPro" id="IPR013320">
    <property type="entry name" value="ConA-like_dom_sf"/>
</dbReference>
<dbReference type="PANTHER" id="PTHR11073:SF2">
    <property type="entry name" value="CALRETICULIN"/>
    <property type="match status" value="1"/>
</dbReference>
<dbReference type="PANTHER" id="PTHR11073">
    <property type="entry name" value="CALRETICULIN AND CALNEXIN"/>
    <property type="match status" value="1"/>
</dbReference>
<dbReference type="Pfam" id="PF00262">
    <property type="entry name" value="Calreticulin"/>
    <property type="match status" value="2"/>
</dbReference>
<dbReference type="PIRSF" id="PIRSF002356">
    <property type="entry name" value="Calreticulin"/>
    <property type="match status" value="1"/>
</dbReference>
<dbReference type="PRINTS" id="PR00626">
    <property type="entry name" value="CALRETICULIN"/>
</dbReference>
<dbReference type="SUPFAM" id="SSF49899">
    <property type="entry name" value="Concanavalin A-like lectins/glucanases"/>
    <property type="match status" value="1"/>
</dbReference>
<dbReference type="SUPFAM" id="SSF63887">
    <property type="entry name" value="P-domain of calnexin/calreticulin"/>
    <property type="match status" value="1"/>
</dbReference>
<dbReference type="PROSITE" id="PS00803">
    <property type="entry name" value="CALRETICULIN_1"/>
    <property type="match status" value="1"/>
</dbReference>
<dbReference type="PROSITE" id="PS00804">
    <property type="entry name" value="CALRETICULIN_2"/>
    <property type="match status" value="1"/>
</dbReference>
<dbReference type="PROSITE" id="PS00805">
    <property type="entry name" value="CALRETICULIN_REPEAT"/>
    <property type="match status" value="1"/>
</dbReference>
<dbReference type="PROSITE" id="PS00014">
    <property type="entry name" value="ER_TARGET"/>
    <property type="match status" value="1"/>
</dbReference>
<proteinExistence type="evidence at transcript level"/>
<keyword id="KW-0106">Calcium</keyword>
<keyword id="KW-0143">Chaperone</keyword>
<keyword id="KW-1015">Disulfide bond</keyword>
<keyword id="KW-0256">Endoplasmic reticulum</keyword>
<keyword id="KW-0430">Lectin</keyword>
<keyword id="KW-0479">Metal-binding</keyword>
<keyword id="KW-0677">Repeat</keyword>
<keyword id="KW-0732">Signal</keyword>
<keyword id="KW-0862">Zinc</keyword>
<protein>
    <recommendedName>
        <fullName>Calreticulin</fullName>
    </recommendedName>
</protein>
<sequence>MKWGVVAVLATLVVAASAKDYFKETFDGSWADRWTKSSWKVSDGSAGEFKLTAGKWYGDAEADKGIQTGPDSKFFAISAPLATVFDNTGKDTVVQFSVKHEQDLDCGGGYIKVVPATSEKQMGEFGGDTPYSIMFGPDICGYSTRKVHVILTYKGKNYLIKKDIKAETDQLTHVYTLVIKPDNTYQVLIDLKEVASGSLYEDWDMLPPKTIKDPKASKPEDWDEREEIADPEDKKPEGWDDIPATIADKDAKKPEDWDDEEDGTWEPPMIPNPEYKGEWKAKMIKNPAYKGIWVAPDIDNPDYVHDDKLYNFKDLKFVGFELWQVKSGSIFDNILVTDDLEAAKKFAEDTWGKHKDEEKAMFDKVKKEEDEKKAKDAPPPPVDAEAAEEEDDEYEDKEEPSGMGSIKIPKEEEESGHDEL</sequence>
<accession>Q9STD3</accession>
<feature type="signal peptide" evidence="3">
    <location>
        <begin position="1"/>
        <end position="18"/>
    </location>
</feature>
<feature type="chain" id="PRO_0000004189" description="Calreticulin">
    <location>
        <begin position="19"/>
        <end position="420"/>
    </location>
</feature>
<feature type="repeat" description="1-1">
    <location>
        <begin position="194"/>
        <end position="205"/>
    </location>
</feature>
<feature type="repeat" description="1-2">
    <location>
        <begin position="213"/>
        <end position="224"/>
    </location>
</feature>
<feature type="repeat" description="1-3">
    <location>
        <begin position="230"/>
        <end position="241"/>
    </location>
</feature>
<feature type="repeat" description="1-4">
    <location>
        <begin position="248"/>
        <end position="259"/>
    </location>
</feature>
<feature type="repeat" description="2-1">
    <location>
        <begin position="263"/>
        <end position="273"/>
    </location>
</feature>
<feature type="repeat" description="2-2">
    <location>
        <begin position="277"/>
        <end position="287"/>
    </location>
</feature>
<feature type="repeat" description="2-3">
    <location>
        <begin position="291"/>
        <end position="301"/>
    </location>
</feature>
<feature type="region of interest" description="4 X approximate repeats">
    <location>
        <begin position="194"/>
        <end position="259"/>
    </location>
</feature>
<feature type="region of interest" description="Disordered" evidence="5">
    <location>
        <begin position="210"/>
        <end position="272"/>
    </location>
</feature>
<feature type="region of interest" description="3 X approximate repeats">
    <location>
        <begin position="263"/>
        <end position="301"/>
    </location>
</feature>
<feature type="region of interest" description="Disordered" evidence="5">
    <location>
        <begin position="357"/>
        <end position="420"/>
    </location>
</feature>
<feature type="short sequence motif" description="Prevents secretion from ER" evidence="4">
    <location>
        <begin position="417"/>
        <end position="420"/>
    </location>
</feature>
<feature type="compositionally biased region" description="Basic and acidic residues" evidence="5">
    <location>
        <begin position="210"/>
        <end position="220"/>
    </location>
</feature>
<feature type="compositionally biased region" description="Acidic residues" evidence="5">
    <location>
        <begin position="221"/>
        <end position="230"/>
    </location>
</feature>
<feature type="compositionally biased region" description="Basic and acidic residues" evidence="5">
    <location>
        <begin position="357"/>
        <end position="376"/>
    </location>
</feature>
<feature type="compositionally biased region" description="Acidic residues" evidence="5">
    <location>
        <begin position="385"/>
        <end position="398"/>
    </location>
</feature>
<feature type="compositionally biased region" description="Acidic residues" evidence="5">
    <location>
        <begin position="411"/>
        <end position="420"/>
    </location>
</feature>
<feature type="binding site" evidence="2">
    <location>
        <position position="110"/>
    </location>
    <ligand>
        <name>an alpha-D-glucoside</name>
        <dbReference type="ChEBI" id="CHEBI:22390"/>
    </ligand>
</feature>
<feature type="binding site" evidence="2">
    <location>
        <position position="112"/>
    </location>
    <ligand>
        <name>an alpha-D-glucoside</name>
        <dbReference type="ChEBI" id="CHEBI:22390"/>
    </ligand>
</feature>
<feature type="binding site" evidence="2">
    <location>
        <position position="131"/>
    </location>
    <ligand>
        <name>an alpha-D-glucoside</name>
        <dbReference type="ChEBI" id="CHEBI:22390"/>
    </ligand>
</feature>
<feature type="binding site" evidence="2">
    <location>
        <position position="138"/>
    </location>
    <ligand>
        <name>an alpha-D-glucoside</name>
        <dbReference type="ChEBI" id="CHEBI:22390"/>
    </ligand>
</feature>
<feature type="binding site" evidence="2">
    <location>
        <position position="321"/>
    </location>
    <ligand>
        <name>an alpha-D-glucoside</name>
        <dbReference type="ChEBI" id="CHEBI:22390"/>
    </ligand>
</feature>
<feature type="disulfide bond" evidence="1">
    <location>
        <begin position="106"/>
        <end position="140"/>
    </location>
</feature>
<organism>
    <name type="scientific">Chlamydomonas reinhardtii</name>
    <name type="common">Chlamydomonas smithii</name>
    <dbReference type="NCBI Taxonomy" id="3055"/>
    <lineage>
        <taxon>Eukaryota</taxon>
        <taxon>Viridiplantae</taxon>
        <taxon>Chlorophyta</taxon>
        <taxon>core chlorophytes</taxon>
        <taxon>Chlorophyceae</taxon>
        <taxon>CS clade</taxon>
        <taxon>Chlamydomonadales</taxon>
        <taxon>Chlamydomonadaceae</taxon>
        <taxon>Chlamydomonas</taxon>
    </lineage>
</organism>
<evidence type="ECO:0000250" key="1"/>
<evidence type="ECO:0000250" key="2">
    <source>
        <dbReference type="UniProtKB" id="P14211"/>
    </source>
</evidence>
<evidence type="ECO:0000255" key="3"/>
<evidence type="ECO:0000255" key="4">
    <source>
        <dbReference type="PROSITE-ProRule" id="PRU10138"/>
    </source>
</evidence>
<evidence type="ECO:0000256" key="5">
    <source>
        <dbReference type="SAM" id="MobiDB-lite"/>
    </source>
</evidence>
<evidence type="ECO:0000305" key="6"/>
<name>CALR_CHLRE</name>
<comment type="function">
    <text evidence="1">Molecular calcium-binding chaperone promoting folding, oligomeric assembly and quality control in the ER via the calreticulin/calnexin cycle. This lectin may interact transiently with almost all of the monoglucosylated glycoproteins that are synthesized in the ER (By similarity).</text>
</comment>
<comment type="subcellular location">
    <subcellularLocation>
        <location evidence="4">Endoplasmic reticulum lumen</location>
    </subcellularLocation>
</comment>
<comment type="domain">
    <text evidence="1">Can be divided into a N-terminal globular domain, a proline-rich P-domain forming an elongated arm-like structure and a C-terminal acidic domain. The P-domain binds one molecule of calcium with high affinity, whereas the acidic C-domain binds multiple calcium ions with low affinity (By similarity).</text>
</comment>
<comment type="domain">
    <text evidence="1">The interaction with glycans occurs through a binding site in the globular lectin domain.</text>
</comment>
<comment type="domain">
    <text evidence="1">The zinc binding sites are localized to the N-domain.</text>
</comment>
<comment type="similarity">
    <text evidence="6">Belongs to the calreticulin family.</text>
</comment>